<gene>
    <name evidence="1" type="primary">secA</name>
    <name type="ordered locus">Gmet_0951</name>
</gene>
<feature type="chain" id="PRO_0000318359" description="Protein translocase subunit SecA">
    <location>
        <begin position="1"/>
        <end position="899"/>
    </location>
</feature>
<feature type="region of interest" description="Disordered" evidence="2">
    <location>
        <begin position="846"/>
        <end position="899"/>
    </location>
</feature>
<feature type="binding site" evidence="1">
    <location>
        <position position="87"/>
    </location>
    <ligand>
        <name>ATP</name>
        <dbReference type="ChEBI" id="CHEBI:30616"/>
    </ligand>
</feature>
<feature type="binding site" evidence="1">
    <location>
        <begin position="105"/>
        <end position="109"/>
    </location>
    <ligand>
        <name>ATP</name>
        <dbReference type="ChEBI" id="CHEBI:30616"/>
    </ligand>
</feature>
<feature type="binding site" evidence="1">
    <location>
        <position position="512"/>
    </location>
    <ligand>
        <name>ATP</name>
        <dbReference type="ChEBI" id="CHEBI:30616"/>
    </ligand>
</feature>
<feature type="binding site" evidence="1">
    <location>
        <position position="885"/>
    </location>
    <ligand>
        <name>Zn(2+)</name>
        <dbReference type="ChEBI" id="CHEBI:29105"/>
    </ligand>
</feature>
<feature type="binding site" evidence="1">
    <location>
        <position position="887"/>
    </location>
    <ligand>
        <name>Zn(2+)</name>
        <dbReference type="ChEBI" id="CHEBI:29105"/>
    </ligand>
</feature>
<feature type="binding site" evidence="1">
    <location>
        <position position="896"/>
    </location>
    <ligand>
        <name>Zn(2+)</name>
        <dbReference type="ChEBI" id="CHEBI:29105"/>
    </ligand>
</feature>
<feature type="binding site" evidence="1">
    <location>
        <position position="897"/>
    </location>
    <ligand>
        <name>Zn(2+)</name>
        <dbReference type="ChEBI" id="CHEBI:29105"/>
    </ligand>
</feature>
<accession>Q39X31</accession>
<keyword id="KW-0067">ATP-binding</keyword>
<keyword id="KW-0997">Cell inner membrane</keyword>
<keyword id="KW-1003">Cell membrane</keyword>
<keyword id="KW-0963">Cytoplasm</keyword>
<keyword id="KW-0472">Membrane</keyword>
<keyword id="KW-0479">Metal-binding</keyword>
<keyword id="KW-0547">Nucleotide-binding</keyword>
<keyword id="KW-0653">Protein transport</keyword>
<keyword id="KW-1185">Reference proteome</keyword>
<keyword id="KW-1278">Translocase</keyword>
<keyword id="KW-0811">Translocation</keyword>
<keyword id="KW-0813">Transport</keyword>
<keyword id="KW-0862">Zinc</keyword>
<proteinExistence type="inferred from homology"/>
<organism>
    <name type="scientific">Geobacter metallireducens (strain ATCC 53774 / DSM 7210 / GS-15)</name>
    <dbReference type="NCBI Taxonomy" id="269799"/>
    <lineage>
        <taxon>Bacteria</taxon>
        <taxon>Pseudomonadati</taxon>
        <taxon>Thermodesulfobacteriota</taxon>
        <taxon>Desulfuromonadia</taxon>
        <taxon>Geobacterales</taxon>
        <taxon>Geobacteraceae</taxon>
        <taxon>Geobacter</taxon>
    </lineage>
</organism>
<sequence length="899" mass="102343">MFGSIIKKIVGSKNERELKRLWPIVEKINGLEPQMAALTDDQLRNKTSEFKERCAKGESLDSLLPEAFAVCREAGKRVHNMRHFDVQLIGGMVLHSGKIAEMKTGEGKTLVATLPAYLNALTGKGVHVVTVNDYLAKRDSDWMGRIYNFLGLSVGVIVHGLDDEERREAYAADITYGTNNEFGFDYLRDNMKFSLDDYVQRPFYFSIVDEVDSILIDEARTPLIISGPTEDSTDKYYIIDRVIPHLKKGEMKEVEANTLSGKKKEYTGDFTVDEKARSATLTEEGVLKVEKLLKIDNLYDPRHMEFLHHVNQALRAHALFRRDVDYVVKEGEVIIVDEFTGRLMPGRRWSDGLHQAIEAKEGVEIENENQTLATITFQNYFRMYEKLSGMTGTADTEAEEFHKIYKLDVTVIPTNRPLLRPDFPDVIYKTEREKFAAVIEEIKDCHQKGQPVLVGTISIEKSEILSELLKKQGIPHNVLNAKQHEREAEIVAQAGRKGMLTIATNMAGRGTDIVLGGNPDSLAKQWRRENPDAADEEYAAILAKYKAECAAEHDEVVKLGGLHILGTERHESRRIDNQLRGRSGRQGDPGSSRFYLSLEDDLLRIFGSERVSKIMDFLKIEEGEAITHGMITKAIENAQKKVEAHNFEIRKHLIEYDDVMNKQREVIYTQRREILAGEDIRGNFTQMLDDTIEDIAAAFAIDKVHASEWDWQAIVEAVYKTFGFQIDIPAETMDRLAPESFRKLLKESVHEAYEGKLASFGDELMDHLIKVIMLQAIDSQWKDHLLSIDHLKEGIGLRGYGQKDPKQEYKKEAYRLFMDMMARIAEETVEKIFWVQIAREEDVERMEEEQQQQAQKKIVFNLGEEPATAPQPARSKKSASRNDPCPCGSGKKYKKCCGK</sequence>
<name>SECA_GEOMG</name>
<protein>
    <recommendedName>
        <fullName evidence="1">Protein translocase subunit SecA</fullName>
        <ecNumber evidence="1">7.4.2.8</ecNumber>
    </recommendedName>
</protein>
<evidence type="ECO:0000255" key="1">
    <source>
        <dbReference type="HAMAP-Rule" id="MF_01382"/>
    </source>
</evidence>
<evidence type="ECO:0000256" key="2">
    <source>
        <dbReference type="SAM" id="MobiDB-lite"/>
    </source>
</evidence>
<reference key="1">
    <citation type="journal article" date="2009" name="BMC Microbiol.">
        <title>The genome sequence of Geobacter metallireducens: features of metabolism, physiology and regulation common and dissimilar to Geobacter sulfurreducens.</title>
        <authorList>
            <person name="Aklujkar M."/>
            <person name="Krushkal J."/>
            <person name="DiBartolo G."/>
            <person name="Lapidus A."/>
            <person name="Land M.L."/>
            <person name="Lovley D.R."/>
        </authorList>
    </citation>
    <scope>NUCLEOTIDE SEQUENCE [LARGE SCALE GENOMIC DNA]</scope>
    <source>
        <strain>ATCC 53774 / DSM 7210 / GS-15</strain>
    </source>
</reference>
<dbReference type="EC" id="7.4.2.8" evidence="1"/>
<dbReference type="EMBL" id="CP000148">
    <property type="protein sequence ID" value="ABB31193.1"/>
    <property type="molecule type" value="Genomic_DNA"/>
</dbReference>
<dbReference type="RefSeq" id="WP_004514434.1">
    <property type="nucleotide sequence ID" value="NC_007517.1"/>
</dbReference>
<dbReference type="SMR" id="Q39X31"/>
<dbReference type="STRING" id="269799.Gmet_0951"/>
<dbReference type="KEGG" id="gme:Gmet_0951"/>
<dbReference type="eggNOG" id="COG0653">
    <property type="taxonomic scope" value="Bacteria"/>
</dbReference>
<dbReference type="HOGENOM" id="CLU_005314_3_0_7"/>
<dbReference type="Proteomes" id="UP000007073">
    <property type="component" value="Chromosome"/>
</dbReference>
<dbReference type="GO" id="GO:0031522">
    <property type="term" value="C:cell envelope Sec protein transport complex"/>
    <property type="evidence" value="ECO:0007669"/>
    <property type="project" value="TreeGrafter"/>
</dbReference>
<dbReference type="GO" id="GO:0005829">
    <property type="term" value="C:cytosol"/>
    <property type="evidence" value="ECO:0007669"/>
    <property type="project" value="TreeGrafter"/>
</dbReference>
<dbReference type="GO" id="GO:0005886">
    <property type="term" value="C:plasma membrane"/>
    <property type="evidence" value="ECO:0007669"/>
    <property type="project" value="UniProtKB-SubCell"/>
</dbReference>
<dbReference type="GO" id="GO:0005524">
    <property type="term" value="F:ATP binding"/>
    <property type="evidence" value="ECO:0007669"/>
    <property type="project" value="UniProtKB-UniRule"/>
</dbReference>
<dbReference type="GO" id="GO:0046872">
    <property type="term" value="F:metal ion binding"/>
    <property type="evidence" value="ECO:0007669"/>
    <property type="project" value="UniProtKB-KW"/>
</dbReference>
<dbReference type="GO" id="GO:0008564">
    <property type="term" value="F:protein-exporting ATPase activity"/>
    <property type="evidence" value="ECO:0007669"/>
    <property type="project" value="UniProtKB-EC"/>
</dbReference>
<dbReference type="GO" id="GO:0065002">
    <property type="term" value="P:intracellular protein transmembrane transport"/>
    <property type="evidence" value="ECO:0007669"/>
    <property type="project" value="UniProtKB-UniRule"/>
</dbReference>
<dbReference type="GO" id="GO:0017038">
    <property type="term" value="P:protein import"/>
    <property type="evidence" value="ECO:0007669"/>
    <property type="project" value="InterPro"/>
</dbReference>
<dbReference type="GO" id="GO:0006605">
    <property type="term" value="P:protein targeting"/>
    <property type="evidence" value="ECO:0007669"/>
    <property type="project" value="UniProtKB-UniRule"/>
</dbReference>
<dbReference type="GO" id="GO:0043952">
    <property type="term" value="P:protein transport by the Sec complex"/>
    <property type="evidence" value="ECO:0007669"/>
    <property type="project" value="TreeGrafter"/>
</dbReference>
<dbReference type="CDD" id="cd17928">
    <property type="entry name" value="DEXDc_SecA"/>
    <property type="match status" value="1"/>
</dbReference>
<dbReference type="CDD" id="cd18803">
    <property type="entry name" value="SF2_C_secA"/>
    <property type="match status" value="1"/>
</dbReference>
<dbReference type="FunFam" id="3.40.50.300:FF:000113">
    <property type="entry name" value="Preprotein translocase subunit SecA"/>
    <property type="match status" value="1"/>
</dbReference>
<dbReference type="FunFam" id="3.40.50.300:FF:000246">
    <property type="entry name" value="Preprotein translocase subunit SecA"/>
    <property type="match status" value="1"/>
</dbReference>
<dbReference type="FunFam" id="3.90.1440.10:FF:000001">
    <property type="entry name" value="Preprotein translocase subunit SecA"/>
    <property type="match status" value="1"/>
</dbReference>
<dbReference type="FunFam" id="1.10.3060.10:FF:000003">
    <property type="entry name" value="Protein translocase subunit SecA"/>
    <property type="match status" value="1"/>
</dbReference>
<dbReference type="FunFam" id="3.40.50.300:FF:000334">
    <property type="entry name" value="Protein translocase subunit SecA"/>
    <property type="match status" value="1"/>
</dbReference>
<dbReference type="Gene3D" id="1.10.3060.10">
    <property type="entry name" value="Helical scaffold and wing domains of SecA"/>
    <property type="match status" value="1"/>
</dbReference>
<dbReference type="Gene3D" id="3.40.50.300">
    <property type="entry name" value="P-loop containing nucleotide triphosphate hydrolases"/>
    <property type="match status" value="2"/>
</dbReference>
<dbReference type="Gene3D" id="3.90.1440.10">
    <property type="entry name" value="SecA, preprotein cross-linking domain"/>
    <property type="match status" value="1"/>
</dbReference>
<dbReference type="HAMAP" id="MF_01382">
    <property type="entry name" value="SecA"/>
    <property type="match status" value="1"/>
</dbReference>
<dbReference type="InterPro" id="IPR014001">
    <property type="entry name" value="Helicase_ATP-bd"/>
</dbReference>
<dbReference type="InterPro" id="IPR001650">
    <property type="entry name" value="Helicase_C-like"/>
</dbReference>
<dbReference type="InterPro" id="IPR027417">
    <property type="entry name" value="P-loop_NTPase"/>
</dbReference>
<dbReference type="InterPro" id="IPR004027">
    <property type="entry name" value="SEC_C_motif"/>
</dbReference>
<dbReference type="InterPro" id="IPR000185">
    <property type="entry name" value="SecA"/>
</dbReference>
<dbReference type="InterPro" id="IPR011115">
    <property type="entry name" value="SecA_DEAD"/>
</dbReference>
<dbReference type="InterPro" id="IPR014018">
    <property type="entry name" value="SecA_motor_DEAD"/>
</dbReference>
<dbReference type="InterPro" id="IPR011130">
    <property type="entry name" value="SecA_preprotein_X-link_dom"/>
</dbReference>
<dbReference type="InterPro" id="IPR044722">
    <property type="entry name" value="SecA_SF2_C"/>
</dbReference>
<dbReference type="InterPro" id="IPR011116">
    <property type="entry name" value="SecA_Wing/Scaffold"/>
</dbReference>
<dbReference type="InterPro" id="IPR036266">
    <property type="entry name" value="SecA_Wing/Scaffold_sf"/>
</dbReference>
<dbReference type="InterPro" id="IPR036670">
    <property type="entry name" value="SecA_X-link_sf"/>
</dbReference>
<dbReference type="NCBIfam" id="NF009538">
    <property type="entry name" value="PRK12904.1"/>
    <property type="match status" value="1"/>
</dbReference>
<dbReference type="NCBIfam" id="TIGR00963">
    <property type="entry name" value="secA"/>
    <property type="match status" value="1"/>
</dbReference>
<dbReference type="PANTHER" id="PTHR30612:SF0">
    <property type="entry name" value="CHLOROPLAST PROTEIN-TRANSPORTING ATPASE"/>
    <property type="match status" value="1"/>
</dbReference>
<dbReference type="PANTHER" id="PTHR30612">
    <property type="entry name" value="SECA INNER MEMBRANE COMPONENT OF SEC PROTEIN SECRETION SYSTEM"/>
    <property type="match status" value="1"/>
</dbReference>
<dbReference type="Pfam" id="PF21090">
    <property type="entry name" value="P-loop_SecA"/>
    <property type="match status" value="1"/>
</dbReference>
<dbReference type="Pfam" id="PF02810">
    <property type="entry name" value="SEC-C"/>
    <property type="match status" value="1"/>
</dbReference>
<dbReference type="Pfam" id="PF07517">
    <property type="entry name" value="SecA_DEAD"/>
    <property type="match status" value="1"/>
</dbReference>
<dbReference type="Pfam" id="PF01043">
    <property type="entry name" value="SecA_PP_bind"/>
    <property type="match status" value="1"/>
</dbReference>
<dbReference type="Pfam" id="PF07516">
    <property type="entry name" value="SecA_SW"/>
    <property type="match status" value="1"/>
</dbReference>
<dbReference type="PRINTS" id="PR00906">
    <property type="entry name" value="SECA"/>
</dbReference>
<dbReference type="SMART" id="SM00957">
    <property type="entry name" value="SecA_DEAD"/>
    <property type="match status" value="1"/>
</dbReference>
<dbReference type="SMART" id="SM00958">
    <property type="entry name" value="SecA_PP_bind"/>
    <property type="match status" value="1"/>
</dbReference>
<dbReference type="SUPFAM" id="SSF81886">
    <property type="entry name" value="Helical scaffold and wing domains of SecA"/>
    <property type="match status" value="1"/>
</dbReference>
<dbReference type="SUPFAM" id="SSF52540">
    <property type="entry name" value="P-loop containing nucleoside triphosphate hydrolases"/>
    <property type="match status" value="2"/>
</dbReference>
<dbReference type="SUPFAM" id="SSF81767">
    <property type="entry name" value="Pre-protein crosslinking domain of SecA"/>
    <property type="match status" value="1"/>
</dbReference>
<dbReference type="PROSITE" id="PS51196">
    <property type="entry name" value="SECA_MOTOR_DEAD"/>
    <property type="match status" value="1"/>
</dbReference>
<comment type="function">
    <text evidence="1">Part of the Sec protein translocase complex. Interacts with the SecYEG preprotein conducting channel. Has a central role in coupling the hydrolysis of ATP to the transfer of proteins into and across the cell membrane, serving as an ATP-driven molecular motor driving the stepwise translocation of polypeptide chains across the membrane.</text>
</comment>
<comment type="catalytic activity">
    <reaction evidence="1">
        <text>ATP + H2O + cellular proteinSide 1 = ADP + phosphate + cellular proteinSide 2.</text>
        <dbReference type="EC" id="7.4.2.8"/>
    </reaction>
</comment>
<comment type="cofactor">
    <cofactor evidence="1">
        <name>Zn(2+)</name>
        <dbReference type="ChEBI" id="CHEBI:29105"/>
    </cofactor>
    <text evidence="1">May bind 1 zinc ion per subunit.</text>
</comment>
<comment type="subunit">
    <text evidence="1">Monomer and homodimer. Part of the essential Sec protein translocation apparatus which comprises SecA, SecYEG and auxiliary proteins SecDF-YajC and YidC.</text>
</comment>
<comment type="subcellular location">
    <subcellularLocation>
        <location evidence="1">Cell inner membrane</location>
        <topology evidence="1">Peripheral membrane protein</topology>
        <orientation evidence="1">Cytoplasmic side</orientation>
    </subcellularLocation>
    <subcellularLocation>
        <location evidence="1">Cytoplasm</location>
    </subcellularLocation>
    <text evidence="1">Distribution is 50-50.</text>
</comment>
<comment type="similarity">
    <text evidence="1">Belongs to the SecA family.</text>
</comment>